<keyword id="KW-0687">Ribonucleoprotein</keyword>
<keyword id="KW-0689">Ribosomal protein</keyword>
<keyword id="KW-0694">RNA-binding</keyword>
<keyword id="KW-0699">rRNA-binding</keyword>
<reference key="1">
    <citation type="journal article" date="2008" name="J. Bacteriol.">
        <title>Complete genome sequence of Neisseria gonorrhoeae NCCP11945.</title>
        <authorList>
            <person name="Chung G.T."/>
            <person name="Yoo J.S."/>
            <person name="Oh H.B."/>
            <person name="Lee Y.S."/>
            <person name="Cha S.H."/>
            <person name="Kim S.J."/>
            <person name="Yoo C.K."/>
        </authorList>
    </citation>
    <scope>NUCLEOTIDE SEQUENCE [LARGE SCALE GENOMIC DNA]</scope>
    <source>
        <strain>NCCP11945</strain>
    </source>
</reference>
<comment type="function">
    <text evidence="1">This protein binds specifically to 23S rRNA; its binding is stimulated by other ribosomal proteins, e.g. L4, L17, and L20. It is important during the early stages of 50S assembly. It makes multiple contacts with different domains of the 23S rRNA in the assembled 50S subunit and ribosome (By similarity).</text>
</comment>
<comment type="function">
    <text evidence="1">The globular domain of the protein is located near the polypeptide exit tunnel on the outside of the subunit, while an extended beta-hairpin is found that lines the wall of the exit tunnel in the center of the 70S ribosome.</text>
</comment>
<comment type="subunit">
    <text evidence="1">Part of the 50S ribosomal subunit.</text>
</comment>
<comment type="similarity">
    <text evidence="1">Belongs to the universal ribosomal protein uL22 family.</text>
</comment>
<protein>
    <recommendedName>
        <fullName evidence="1">Large ribosomal subunit protein uL22</fullName>
    </recommendedName>
    <alternativeName>
        <fullName evidence="2">50S ribosomal protein L22</fullName>
    </alternativeName>
</protein>
<organism>
    <name type="scientific">Neisseria gonorrhoeae (strain NCCP11945)</name>
    <dbReference type="NCBI Taxonomy" id="521006"/>
    <lineage>
        <taxon>Bacteria</taxon>
        <taxon>Pseudomonadati</taxon>
        <taxon>Pseudomonadota</taxon>
        <taxon>Betaproteobacteria</taxon>
        <taxon>Neisseriales</taxon>
        <taxon>Neisseriaceae</taxon>
        <taxon>Neisseria</taxon>
    </lineage>
</organism>
<gene>
    <name evidence="1" type="primary">rplV</name>
    <name type="ordered locus">NGK_2441</name>
</gene>
<sequence>MRVNAQHKNARISAQKARLVADLIRGKDVAQALNILAFSPKKGAELIKKVLESAIANAEHNNGADIDELKVVTIFVDKGPSLKRFQARAKGRGNRIEKQTCHINVTVGN</sequence>
<feature type="chain" id="PRO_1000142288" description="Large ribosomal subunit protein uL22">
    <location>
        <begin position="1"/>
        <end position="109"/>
    </location>
</feature>
<evidence type="ECO:0000255" key="1">
    <source>
        <dbReference type="HAMAP-Rule" id="MF_01331"/>
    </source>
</evidence>
<evidence type="ECO:0000305" key="2"/>
<dbReference type="EMBL" id="CP001050">
    <property type="protein sequence ID" value="ACF31042.1"/>
    <property type="molecule type" value="Genomic_DNA"/>
</dbReference>
<dbReference type="RefSeq" id="WP_002215424.1">
    <property type="nucleotide sequence ID" value="NC_011035.1"/>
</dbReference>
<dbReference type="SMR" id="B4RQY3"/>
<dbReference type="GeneID" id="93387222"/>
<dbReference type="KEGG" id="ngk:NGK_2441"/>
<dbReference type="HOGENOM" id="CLU_083987_3_3_4"/>
<dbReference type="Proteomes" id="UP000002564">
    <property type="component" value="Chromosome"/>
</dbReference>
<dbReference type="GO" id="GO:0022625">
    <property type="term" value="C:cytosolic large ribosomal subunit"/>
    <property type="evidence" value="ECO:0007669"/>
    <property type="project" value="TreeGrafter"/>
</dbReference>
<dbReference type="GO" id="GO:0019843">
    <property type="term" value="F:rRNA binding"/>
    <property type="evidence" value="ECO:0007669"/>
    <property type="project" value="UniProtKB-UniRule"/>
</dbReference>
<dbReference type="GO" id="GO:0003735">
    <property type="term" value="F:structural constituent of ribosome"/>
    <property type="evidence" value="ECO:0007669"/>
    <property type="project" value="InterPro"/>
</dbReference>
<dbReference type="GO" id="GO:0006412">
    <property type="term" value="P:translation"/>
    <property type="evidence" value="ECO:0007669"/>
    <property type="project" value="UniProtKB-UniRule"/>
</dbReference>
<dbReference type="CDD" id="cd00336">
    <property type="entry name" value="Ribosomal_L22"/>
    <property type="match status" value="1"/>
</dbReference>
<dbReference type="FunFam" id="3.90.470.10:FF:000001">
    <property type="entry name" value="50S ribosomal protein L22"/>
    <property type="match status" value="1"/>
</dbReference>
<dbReference type="Gene3D" id="3.90.470.10">
    <property type="entry name" value="Ribosomal protein L22/L17"/>
    <property type="match status" value="1"/>
</dbReference>
<dbReference type="HAMAP" id="MF_01331_B">
    <property type="entry name" value="Ribosomal_uL22_B"/>
    <property type="match status" value="1"/>
</dbReference>
<dbReference type="InterPro" id="IPR001063">
    <property type="entry name" value="Ribosomal_uL22"/>
</dbReference>
<dbReference type="InterPro" id="IPR005727">
    <property type="entry name" value="Ribosomal_uL22_bac/chlpt-type"/>
</dbReference>
<dbReference type="InterPro" id="IPR047867">
    <property type="entry name" value="Ribosomal_uL22_bac/org-type"/>
</dbReference>
<dbReference type="InterPro" id="IPR018260">
    <property type="entry name" value="Ribosomal_uL22_CS"/>
</dbReference>
<dbReference type="InterPro" id="IPR036394">
    <property type="entry name" value="Ribosomal_uL22_sf"/>
</dbReference>
<dbReference type="NCBIfam" id="TIGR01044">
    <property type="entry name" value="rplV_bact"/>
    <property type="match status" value="1"/>
</dbReference>
<dbReference type="PANTHER" id="PTHR13501">
    <property type="entry name" value="CHLOROPLAST 50S RIBOSOMAL PROTEIN L22-RELATED"/>
    <property type="match status" value="1"/>
</dbReference>
<dbReference type="PANTHER" id="PTHR13501:SF8">
    <property type="entry name" value="LARGE RIBOSOMAL SUBUNIT PROTEIN UL22M"/>
    <property type="match status" value="1"/>
</dbReference>
<dbReference type="Pfam" id="PF00237">
    <property type="entry name" value="Ribosomal_L22"/>
    <property type="match status" value="1"/>
</dbReference>
<dbReference type="SUPFAM" id="SSF54843">
    <property type="entry name" value="Ribosomal protein L22"/>
    <property type="match status" value="1"/>
</dbReference>
<dbReference type="PROSITE" id="PS00464">
    <property type="entry name" value="RIBOSOMAL_L22"/>
    <property type="match status" value="1"/>
</dbReference>
<name>RL22_NEIG2</name>
<accession>B4RQY3</accession>
<proteinExistence type="inferred from homology"/>